<gene>
    <name evidence="1" type="primary">rppH</name>
    <name evidence="1" type="synonym">nudH</name>
    <name type="ordered locus">RSc2817</name>
    <name type="ORF">RS00288</name>
</gene>
<proteinExistence type="inferred from homology"/>
<reference key="1">
    <citation type="journal article" date="2002" name="Nature">
        <title>Genome sequence of the plant pathogen Ralstonia solanacearum.</title>
        <authorList>
            <person name="Salanoubat M."/>
            <person name="Genin S."/>
            <person name="Artiguenave F."/>
            <person name="Gouzy J."/>
            <person name="Mangenot S."/>
            <person name="Arlat M."/>
            <person name="Billault A."/>
            <person name="Brottier P."/>
            <person name="Camus J.-C."/>
            <person name="Cattolico L."/>
            <person name="Chandler M."/>
            <person name="Choisne N."/>
            <person name="Claudel-Renard C."/>
            <person name="Cunnac S."/>
            <person name="Demange N."/>
            <person name="Gaspin C."/>
            <person name="Lavie M."/>
            <person name="Moisan A."/>
            <person name="Robert C."/>
            <person name="Saurin W."/>
            <person name="Schiex T."/>
            <person name="Siguier P."/>
            <person name="Thebault P."/>
            <person name="Whalen M."/>
            <person name="Wincker P."/>
            <person name="Levy M."/>
            <person name="Weissenbach J."/>
            <person name="Boucher C.A."/>
        </authorList>
    </citation>
    <scope>NUCLEOTIDE SEQUENCE [LARGE SCALE GENOMIC DNA]</scope>
    <source>
        <strain>ATCC BAA-1114 / GMI1000</strain>
    </source>
</reference>
<name>RPPH_RALN1</name>
<comment type="function">
    <text evidence="1">Accelerates the degradation of transcripts by removing pyrophosphate from the 5'-end of triphosphorylated RNA, leading to a more labile monophosphorylated state that can stimulate subsequent ribonuclease cleavage.</text>
</comment>
<comment type="cofactor">
    <cofactor evidence="1">
        <name>a divalent metal cation</name>
        <dbReference type="ChEBI" id="CHEBI:60240"/>
    </cofactor>
</comment>
<comment type="similarity">
    <text evidence="1">Belongs to the Nudix hydrolase family. RppH subfamily.</text>
</comment>
<accession>Q8XVL3</accession>
<keyword id="KW-0378">Hydrolase</keyword>
<keyword id="KW-1185">Reference proteome</keyword>
<evidence type="ECO:0000255" key="1">
    <source>
        <dbReference type="HAMAP-Rule" id="MF_00298"/>
    </source>
</evidence>
<evidence type="ECO:0000256" key="2">
    <source>
        <dbReference type="SAM" id="MobiDB-lite"/>
    </source>
</evidence>
<dbReference type="EC" id="3.6.1.-" evidence="1"/>
<dbReference type="EMBL" id="AL646052">
    <property type="protein sequence ID" value="CAD16524.1"/>
    <property type="molecule type" value="Genomic_DNA"/>
</dbReference>
<dbReference type="RefSeq" id="WP_011002724.1">
    <property type="nucleotide sequence ID" value="NC_003295.1"/>
</dbReference>
<dbReference type="SMR" id="Q8XVL3"/>
<dbReference type="STRING" id="267608.RSc2817"/>
<dbReference type="EnsemblBacteria" id="CAD16524">
    <property type="protein sequence ID" value="CAD16524"/>
    <property type="gene ID" value="RSc2817"/>
</dbReference>
<dbReference type="KEGG" id="rso:RSc2817"/>
<dbReference type="PATRIC" id="fig|267608.8.peg.2868"/>
<dbReference type="eggNOG" id="COG0494">
    <property type="taxonomic scope" value="Bacteria"/>
</dbReference>
<dbReference type="HOGENOM" id="CLU_087195_1_0_4"/>
<dbReference type="Proteomes" id="UP000001436">
    <property type="component" value="Chromosome"/>
</dbReference>
<dbReference type="GO" id="GO:0016462">
    <property type="term" value="F:pyrophosphatase activity"/>
    <property type="evidence" value="ECO:0007669"/>
    <property type="project" value="UniProtKB-ARBA"/>
</dbReference>
<dbReference type="CDD" id="cd03671">
    <property type="entry name" value="NUDIX_Ap4A_hydrolase_plant_like"/>
    <property type="match status" value="1"/>
</dbReference>
<dbReference type="Gene3D" id="3.90.79.10">
    <property type="entry name" value="Nucleoside Triphosphate Pyrophosphohydrolase"/>
    <property type="match status" value="1"/>
</dbReference>
<dbReference type="HAMAP" id="MF_00298">
    <property type="entry name" value="Nudix_RppH"/>
    <property type="match status" value="1"/>
</dbReference>
<dbReference type="InterPro" id="IPR020476">
    <property type="entry name" value="Nudix_hydrolase"/>
</dbReference>
<dbReference type="InterPro" id="IPR015797">
    <property type="entry name" value="NUDIX_hydrolase-like_dom_sf"/>
</dbReference>
<dbReference type="InterPro" id="IPR020084">
    <property type="entry name" value="NUDIX_hydrolase_CS"/>
</dbReference>
<dbReference type="InterPro" id="IPR000086">
    <property type="entry name" value="NUDIX_hydrolase_dom"/>
</dbReference>
<dbReference type="InterPro" id="IPR022927">
    <property type="entry name" value="RppH"/>
</dbReference>
<dbReference type="NCBIfam" id="NF001935">
    <property type="entry name" value="PRK00714.1-2"/>
    <property type="match status" value="1"/>
</dbReference>
<dbReference type="NCBIfam" id="NF001937">
    <property type="entry name" value="PRK00714.1-4"/>
    <property type="match status" value="1"/>
</dbReference>
<dbReference type="NCBIfam" id="NF001938">
    <property type="entry name" value="PRK00714.1-5"/>
    <property type="match status" value="1"/>
</dbReference>
<dbReference type="PANTHER" id="PTHR43736">
    <property type="entry name" value="ADP-RIBOSE PYROPHOSPHATASE"/>
    <property type="match status" value="1"/>
</dbReference>
<dbReference type="PANTHER" id="PTHR43736:SF1">
    <property type="entry name" value="DIHYDRONEOPTERIN TRIPHOSPHATE DIPHOSPHATASE"/>
    <property type="match status" value="1"/>
</dbReference>
<dbReference type="Pfam" id="PF00293">
    <property type="entry name" value="NUDIX"/>
    <property type="match status" value="1"/>
</dbReference>
<dbReference type="PRINTS" id="PR00502">
    <property type="entry name" value="NUDIXFAMILY"/>
</dbReference>
<dbReference type="SUPFAM" id="SSF55811">
    <property type="entry name" value="Nudix"/>
    <property type="match status" value="1"/>
</dbReference>
<dbReference type="PROSITE" id="PS51462">
    <property type="entry name" value="NUDIX"/>
    <property type="match status" value="1"/>
</dbReference>
<dbReference type="PROSITE" id="PS00893">
    <property type="entry name" value="NUDIX_BOX"/>
    <property type="match status" value="1"/>
</dbReference>
<protein>
    <recommendedName>
        <fullName evidence="1">RNA pyrophosphohydrolase</fullName>
        <ecNumber evidence="1">3.6.1.-</ecNumber>
    </recommendedName>
    <alternativeName>
        <fullName evidence="1">(Di)nucleoside polyphosphate hydrolase</fullName>
    </alternativeName>
</protein>
<sequence length="238" mass="27745">MLDREGFRPNVGIILINARNEVFWGKRIGEHSWQFPQGGIKYGETPEQAMYRELHEEVGLLPEHVRIVGRTRDWLRYEVPDKFIRREIRGHYRGQKQIWFLLRMVGRDCDIQLRATEHPEFDAWRWSQYWVPLDAVIEFKREVYQMALSELSRFVQRSHRAPLSPYGRGGPHRERDGRDNRAGGQAGRNDQNTRGQRQPPTLMVTTSTVIVETVITSRPAAQPIDSSNPDDTPSKDSL</sequence>
<organism>
    <name type="scientific">Ralstonia nicotianae (strain ATCC BAA-1114 / GMI1000)</name>
    <name type="common">Ralstonia solanacearum</name>
    <dbReference type="NCBI Taxonomy" id="267608"/>
    <lineage>
        <taxon>Bacteria</taxon>
        <taxon>Pseudomonadati</taxon>
        <taxon>Pseudomonadota</taxon>
        <taxon>Betaproteobacteria</taxon>
        <taxon>Burkholderiales</taxon>
        <taxon>Burkholderiaceae</taxon>
        <taxon>Ralstonia</taxon>
        <taxon>Ralstonia solanacearum species complex</taxon>
    </lineage>
</organism>
<feature type="chain" id="PRO_0000057020" description="RNA pyrophosphohydrolase">
    <location>
        <begin position="1"/>
        <end position="238"/>
    </location>
</feature>
<feature type="domain" description="Nudix hydrolase" evidence="1">
    <location>
        <begin position="6"/>
        <end position="149"/>
    </location>
</feature>
<feature type="region of interest" description="Disordered" evidence="2">
    <location>
        <begin position="161"/>
        <end position="238"/>
    </location>
</feature>
<feature type="short sequence motif" description="Nudix box">
    <location>
        <begin position="38"/>
        <end position="59"/>
    </location>
</feature>
<feature type="compositionally biased region" description="Basic and acidic residues" evidence="2">
    <location>
        <begin position="171"/>
        <end position="181"/>
    </location>
</feature>
<feature type="compositionally biased region" description="Polar residues" evidence="2">
    <location>
        <begin position="188"/>
        <end position="199"/>
    </location>
</feature>
<feature type="compositionally biased region" description="Low complexity" evidence="2">
    <location>
        <begin position="204"/>
        <end position="217"/>
    </location>
</feature>